<evidence type="ECO:0000255" key="1">
    <source>
        <dbReference type="HAMAP-Rule" id="MF_04003"/>
    </source>
</evidence>
<protein>
    <recommendedName>
        <fullName evidence="1">Minor capsid protein L2</fullName>
    </recommendedName>
</protein>
<comment type="function">
    <text evidence="1">Minor protein of the capsid that localizes along the inner surface of the virion, within the central cavities beneath the L1 pentamers. Plays a role in capsid stabilization through interaction with the major capsid protein L1. Once the virion enters the host cell, L2 escorts the genomic DNA into the nucleus by promoting escape from the endosomal compartments and traffic through the host Golgi network. Mechanistically, the C-terminus of L2 possesses a cell-penetrating peptide that protudes from the host endosome, interacts with host cytoplasmic retromer cargo and thereby mediates the capsid delivery to the host trans-Golgi network. Plays a role through its interaction with host dynein in the intracellular microtubule-dependent transport of viral capsid toward the nucleus. Mediates the viral genome import into the nucleus through binding to host importins. Once within the nucleus, L2 localizes viral genomes to host PML bodies in order to activate early gene expression for establishment of infection. Later on, promotes late gene expression by interacting with the viral E2 protein and by inhibiting its transcriptional activation functions. During virion assembly, encapsidates the genome by direct interaction with the viral DNA.</text>
</comment>
<comment type="subunit">
    <text evidence="1">Interacts with major capsid protein L1. Interacts with E2; this interaction inhibits E2 transcriptional activity but not the DNA replication function E2. Interacts with host GADD45GIP1. Interacts with host HSPA8; this interaction is required for L2 nuclear translocation. Interacts with host importins KPNB2 and KPNB3. Forms a complex with importin alpha2-beta1 heterodimers via interaction with the importin alpha2 adapter. Interacts with host DYNLT1; this interaction is essential for virus intracellular transport during entry. Interacts (via C-terminus) with host retromer subunits VPS35 and VPS29.</text>
</comment>
<comment type="subcellular location">
    <subcellularLocation>
        <location evidence="1">Virion</location>
    </subcellularLocation>
    <subcellularLocation>
        <location evidence="1">Host nucleus</location>
    </subcellularLocation>
    <subcellularLocation>
        <location evidence="1">Host early endosome</location>
    </subcellularLocation>
    <subcellularLocation>
        <location evidence="1">Host Golgi apparatus</location>
    </subcellularLocation>
</comment>
<comment type="PTM">
    <text evidence="1">Highly phosphorylated.</text>
</comment>
<comment type="similarity">
    <text evidence="1">Belongs to the papillomaviridae L2 protein family.</text>
</comment>
<feature type="chain" id="PRO_0000133624" description="Minor capsid protein L2">
    <location>
        <begin position="1"/>
        <end position="472"/>
    </location>
</feature>
<feature type="short sequence motif" description="Nuclear localization signal" evidence="1">
    <location>
        <begin position="1"/>
        <end position="12"/>
    </location>
</feature>
<feature type="short sequence motif" description="Nuclear localization signal" evidence="1">
    <location>
        <begin position="453"/>
        <end position="461"/>
    </location>
</feature>
<feature type="disulfide bond" evidence="1">
    <location>
        <begin position="21"/>
        <end position="27"/>
    </location>
</feature>
<keyword id="KW-0167">Capsid protein</keyword>
<keyword id="KW-1176">Cytoplasmic inwards viral transport</keyword>
<keyword id="KW-1015">Disulfide bond</keyword>
<keyword id="KW-0238">DNA-binding</keyword>
<keyword id="KW-1039">Host endosome</keyword>
<keyword id="KW-1040">Host Golgi apparatus</keyword>
<keyword id="KW-1048">Host nucleus</keyword>
<keyword id="KW-0945">Host-virus interaction</keyword>
<keyword id="KW-0426">Late protein</keyword>
<keyword id="KW-1177">Microtubular inwards viral transport</keyword>
<keyword id="KW-0597">Phosphoprotein</keyword>
<keyword id="KW-1163">Viral penetration into host nucleus</keyword>
<keyword id="KW-0946">Virion</keyword>
<keyword id="KW-1160">Virus entry into host cell</keyword>
<organismHost>
    <name type="scientific">Homo sapiens</name>
    <name type="common">Human</name>
    <dbReference type="NCBI Taxonomy" id="9606"/>
</organismHost>
<sequence>MRHKRSTRRKRASATQLYQTCKASGTCPPDVIPKVEGTTIADQILRYGSLGVFFGGLGIGTGSGTGGRTGYVPLGSTPPSEAIPLQPIRPPVTVDTVGPLDSSIVSLIEESSFIDAGAPAPSIPTPSGFDITTSADTTPAILNVSSIGESSIQTVSTHLNPSFTEPSVLRPPAPAEASGHLIFSSPTVSTHSYENIPMDTFVISTDSGNVTSSTPIPGSRPVARLGLYSRNTQQVKVVDPAFLTSPHRLVTYDNPAFEGFNPEDTLQFQHSDISPAPDPDFLDIVALHRPALTSRRGTVRYSRVGQKATLRTRSGKQIGAKVHYYQDLSPIQPVQEQVQQQQQFELQSLNTSVSPYSINDGLYDIYADDADTIHDFQSPLHSHTSFATTRTSNVSIPLNTGFDTPLVSLEPGPDIASSVTSMSSPFIPISPLTPFNTIIVDGADFMLHPSYFILRRRRKRFPYFFADVRVAA</sequence>
<name>VL2_HPV58</name>
<gene>
    <name evidence="1" type="primary">L2</name>
</gene>
<proteinExistence type="inferred from homology"/>
<accession>P26538</accession>
<dbReference type="EMBL" id="D90400">
    <property type="protein sequence ID" value="BAA31850.1"/>
    <property type="molecule type" value="Genomic_DNA"/>
</dbReference>
<dbReference type="PIR" id="H36779">
    <property type="entry name" value="P2WL58"/>
</dbReference>
<dbReference type="Proteomes" id="UP000007668">
    <property type="component" value="Genome"/>
</dbReference>
<dbReference type="GO" id="GO:0043657">
    <property type="term" value="C:host cell"/>
    <property type="evidence" value="ECO:0007669"/>
    <property type="project" value="GOC"/>
</dbReference>
<dbReference type="GO" id="GO:0044174">
    <property type="term" value="C:host cell endosome"/>
    <property type="evidence" value="ECO:0007669"/>
    <property type="project" value="UniProtKB-KW"/>
</dbReference>
<dbReference type="GO" id="GO:0044177">
    <property type="term" value="C:host cell Golgi apparatus"/>
    <property type="evidence" value="ECO:0007669"/>
    <property type="project" value="UniProtKB-SubCell"/>
</dbReference>
<dbReference type="GO" id="GO:0042025">
    <property type="term" value="C:host cell nucleus"/>
    <property type="evidence" value="ECO:0007669"/>
    <property type="project" value="UniProtKB-SubCell"/>
</dbReference>
<dbReference type="GO" id="GO:0019028">
    <property type="term" value="C:viral capsid"/>
    <property type="evidence" value="ECO:0007669"/>
    <property type="project" value="UniProtKB-UniRule"/>
</dbReference>
<dbReference type="GO" id="GO:0003677">
    <property type="term" value="F:DNA binding"/>
    <property type="evidence" value="ECO:0007669"/>
    <property type="project" value="UniProtKB-UniRule"/>
</dbReference>
<dbReference type="GO" id="GO:0005198">
    <property type="term" value="F:structural molecule activity"/>
    <property type="evidence" value="ECO:0007669"/>
    <property type="project" value="UniProtKB-UniRule"/>
</dbReference>
<dbReference type="GO" id="GO:0075521">
    <property type="term" value="P:microtubule-dependent intracellular transport of viral material towards nucleus"/>
    <property type="evidence" value="ECO:0007669"/>
    <property type="project" value="UniProtKB-UniRule"/>
</dbReference>
<dbReference type="GO" id="GO:0046718">
    <property type="term" value="P:symbiont entry into host cell"/>
    <property type="evidence" value="ECO:0007669"/>
    <property type="project" value="UniProtKB-KW"/>
</dbReference>
<dbReference type="GO" id="GO:0075732">
    <property type="term" value="P:viral penetration into host nucleus"/>
    <property type="evidence" value="ECO:0007669"/>
    <property type="project" value="UniProtKB-KW"/>
</dbReference>
<dbReference type="HAMAP" id="MF_04003">
    <property type="entry name" value="PPV_L2"/>
    <property type="match status" value="1"/>
</dbReference>
<dbReference type="InterPro" id="IPR000784">
    <property type="entry name" value="Late_L2"/>
</dbReference>
<dbReference type="Pfam" id="PF00513">
    <property type="entry name" value="Late_protein_L2"/>
    <property type="match status" value="2"/>
</dbReference>
<reference key="1">
    <citation type="journal article" date="1991" name="Virology">
        <title>Human papillomavirus type 58 DNA sequence.</title>
        <authorList>
            <person name="Kirii Y."/>
            <person name="Iwamoto S."/>
            <person name="Matsukura T."/>
        </authorList>
    </citation>
    <scope>NUCLEOTIDE SEQUENCE [GENOMIC DNA]</scope>
</reference>
<organism>
    <name type="scientific">Human papillomavirus 58</name>
    <dbReference type="NCBI Taxonomy" id="10598"/>
    <lineage>
        <taxon>Viruses</taxon>
        <taxon>Monodnaviria</taxon>
        <taxon>Shotokuvirae</taxon>
        <taxon>Cossaviricota</taxon>
        <taxon>Papovaviricetes</taxon>
        <taxon>Zurhausenvirales</taxon>
        <taxon>Papillomaviridae</taxon>
        <taxon>Firstpapillomavirinae</taxon>
        <taxon>Alphapapillomavirus</taxon>
        <taxon>Alphapapillomavirus 9</taxon>
    </lineage>
</organism>